<feature type="chain" id="PRO_0000331049" description="SsrA-binding protein">
    <location>
        <begin position="1"/>
        <end position="154"/>
    </location>
</feature>
<sequence>MISTGIAAQNRKGRFNYTILETLEAGMVLKGPEVKSLRLGRATINEAYAGDRDGEIWLFNSYIPEYQGGVLSRFETRAPRKLLLHRKQVDKLLGAVARDGVTLVPLDIHFNARGVAKVTLGIGEGRKKADKRQAIADRDWQRDKARLLRNKGRE</sequence>
<evidence type="ECO:0000255" key="1">
    <source>
        <dbReference type="HAMAP-Rule" id="MF_00023"/>
    </source>
</evidence>
<evidence type="ECO:0000305" key="2"/>
<name>SSRP_GLUDA</name>
<protein>
    <recommendedName>
        <fullName evidence="1">SsrA-binding protein</fullName>
    </recommendedName>
    <alternativeName>
        <fullName evidence="1">Small protein B</fullName>
    </alternativeName>
</protein>
<dbReference type="EMBL" id="AM889285">
    <property type="protein sequence ID" value="CAP55823.1"/>
    <property type="molecule type" value="Genomic_DNA"/>
</dbReference>
<dbReference type="EMBL" id="CP001189">
    <property type="protein sequence ID" value="ACI49904.1"/>
    <property type="status" value="ALT_INIT"/>
    <property type="molecule type" value="Genomic_DNA"/>
</dbReference>
<dbReference type="RefSeq" id="WP_012552957.1">
    <property type="nucleotide sequence ID" value="NC_011365.1"/>
</dbReference>
<dbReference type="SMR" id="A9HIW5"/>
<dbReference type="STRING" id="272568.GDI1880"/>
<dbReference type="KEGG" id="gdi:GDI1880"/>
<dbReference type="KEGG" id="gdj:Gdia_0104"/>
<dbReference type="eggNOG" id="COG0691">
    <property type="taxonomic scope" value="Bacteria"/>
</dbReference>
<dbReference type="HOGENOM" id="CLU_108953_0_1_5"/>
<dbReference type="OrthoDB" id="9805462at2"/>
<dbReference type="Proteomes" id="UP000001176">
    <property type="component" value="Chromosome"/>
</dbReference>
<dbReference type="GO" id="GO:0005829">
    <property type="term" value="C:cytosol"/>
    <property type="evidence" value="ECO:0007669"/>
    <property type="project" value="TreeGrafter"/>
</dbReference>
<dbReference type="GO" id="GO:0003723">
    <property type="term" value="F:RNA binding"/>
    <property type="evidence" value="ECO:0007669"/>
    <property type="project" value="UniProtKB-UniRule"/>
</dbReference>
<dbReference type="GO" id="GO:0070929">
    <property type="term" value="P:trans-translation"/>
    <property type="evidence" value="ECO:0007669"/>
    <property type="project" value="UniProtKB-UniRule"/>
</dbReference>
<dbReference type="CDD" id="cd09294">
    <property type="entry name" value="SmpB"/>
    <property type="match status" value="1"/>
</dbReference>
<dbReference type="Gene3D" id="2.40.280.10">
    <property type="match status" value="1"/>
</dbReference>
<dbReference type="HAMAP" id="MF_00023">
    <property type="entry name" value="SmpB"/>
    <property type="match status" value="1"/>
</dbReference>
<dbReference type="InterPro" id="IPR023620">
    <property type="entry name" value="SmpB"/>
</dbReference>
<dbReference type="InterPro" id="IPR000037">
    <property type="entry name" value="SsrA-bd_prot"/>
</dbReference>
<dbReference type="InterPro" id="IPR020081">
    <property type="entry name" value="SsrA-bd_prot_CS"/>
</dbReference>
<dbReference type="NCBIfam" id="NF003843">
    <property type="entry name" value="PRK05422.1"/>
    <property type="match status" value="1"/>
</dbReference>
<dbReference type="NCBIfam" id="TIGR00086">
    <property type="entry name" value="smpB"/>
    <property type="match status" value="1"/>
</dbReference>
<dbReference type="PANTHER" id="PTHR30308:SF2">
    <property type="entry name" value="SSRA-BINDING PROTEIN"/>
    <property type="match status" value="1"/>
</dbReference>
<dbReference type="PANTHER" id="PTHR30308">
    <property type="entry name" value="TMRNA-BINDING COMPONENT OF TRANS-TRANSLATION TAGGING COMPLEX"/>
    <property type="match status" value="1"/>
</dbReference>
<dbReference type="Pfam" id="PF01668">
    <property type="entry name" value="SmpB"/>
    <property type="match status" value="1"/>
</dbReference>
<dbReference type="SUPFAM" id="SSF74982">
    <property type="entry name" value="Small protein B (SmpB)"/>
    <property type="match status" value="1"/>
</dbReference>
<dbReference type="PROSITE" id="PS01317">
    <property type="entry name" value="SSRP"/>
    <property type="match status" value="1"/>
</dbReference>
<gene>
    <name evidence="1" type="primary">smpB</name>
    <name type="ordered locus">GDI1880</name>
    <name type="ordered locus">Gdia_0104</name>
</gene>
<organism>
    <name type="scientific">Gluconacetobacter diazotrophicus (strain ATCC 49037 / DSM 5601 / CCUG 37298 / CIP 103539 / LMG 7603 / PAl5)</name>
    <dbReference type="NCBI Taxonomy" id="272568"/>
    <lineage>
        <taxon>Bacteria</taxon>
        <taxon>Pseudomonadati</taxon>
        <taxon>Pseudomonadota</taxon>
        <taxon>Alphaproteobacteria</taxon>
        <taxon>Acetobacterales</taxon>
        <taxon>Acetobacteraceae</taxon>
        <taxon>Gluconacetobacter</taxon>
    </lineage>
</organism>
<keyword id="KW-0963">Cytoplasm</keyword>
<keyword id="KW-1185">Reference proteome</keyword>
<keyword id="KW-0694">RNA-binding</keyword>
<reference key="1">
    <citation type="journal article" date="2009" name="BMC Genomics">
        <title>Complete genome sequence of the sugarcane nitrogen-fixing endophyte Gluconacetobacter diazotrophicus Pal5.</title>
        <authorList>
            <person name="Bertalan M."/>
            <person name="Albano R."/>
            <person name="de Padua V."/>
            <person name="Rouws L."/>
            <person name="Rojas C."/>
            <person name="Hemerly A."/>
            <person name="Teixeira K."/>
            <person name="Schwab S."/>
            <person name="Araujo J."/>
            <person name="Oliveira A."/>
            <person name="Franca L."/>
            <person name="Magalhaes V."/>
            <person name="Alqueres S."/>
            <person name="Cardoso A."/>
            <person name="Almeida W."/>
            <person name="Loureiro M.M."/>
            <person name="Nogueira E."/>
            <person name="Cidade D."/>
            <person name="Oliveira D."/>
            <person name="Simao T."/>
            <person name="Macedo J."/>
            <person name="Valadao A."/>
            <person name="Dreschsel M."/>
            <person name="Freitas F."/>
            <person name="Vidal M."/>
            <person name="Guedes H."/>
            <person name="Rodrigues E."/>
            <person name="Meneses C."/>
            <person name="Brioso P."/>
            <person name="Pozzer L."/>
            <person name="Figueiredo D."/>
            <person name="Montano H."/>
            <person name="Junior J."/>
            <person name="de Souza Filho G."/>
            <person name="Martin Quintana Flores V."/>
            <person name="Ferreira B."/>
            <person name="Branco A."/>
            <person name="Gonzalez P."/>
            <person name="Guillobel H."/>
            <person name="Lemos M."/>
            <person name="Seibel L."/>
            <person name="Macedo J."/>
            <person name="Alves-Ferreira M."/>
            <person name="Sachetto-Martins G."/>
            <person name="Coelho A."/>
            <person name="Santos E."/>
            <person name="Amaral G."/>
            <person name="Neves A."/>
            <person name="Pacheco A.B."/>
            <person name="Carvalho D."/>
            <person name="Lery L."/>
            <person name="Bisch P."/>
            <person name="Rossle S.C."/>
            <person name="Urmenyi T."/>
            <person name="Rael Pereira A."/>
            <person name="Silva R."/>
            <person name="Rondinelli E."/>
            <person name="von Kruger W."/>
            <person name="Martins O."/>
            <person name="Baldani J.I."/>
            <person name="Ferreira P.C."/>
        </authorList>
    </citation>
    <scope>NUCLEOTIDE SEQUENCE [LARGE SCALE GENOMIC DNA]</scope>
    <source>
        <strain>ATCC 49037 / DSM 5601 / CCUG 37298 / CIP 103539 / LMG 7603 / PAl5</strain>
    </source>
</reference>
<reference key="2">
    <citation type="journal article" date="2010" name="Stand. Genomic Sci.">
        <title>Two genome sequences of the same bacterial strain, Gluconacetobacter diazotrophicus PAl 5, suggest a new standard in genome sequence submission.</title>
        <authorList>
            <person name="Giongo A."/>
            <person name="Tyler H.L."/>
            <person name="Zipperer U.N."/>
            <person name="Triplett E.W."/>
        </authorList>
    </citation>
    <scope>NUCLEOTIDE SEQUENCE [LARGE SCALE GENOMIC DNA]</scope>
    <source>
        <strain>ATCC 49037 / DSM 5601 / CCUG 37298 / CIP 103539 / LMG 7603 / PAl5</strain>
    </source>
</reference>
<accession>A9HIW5</accession>
<accession>B5ZJW5</accession>
<comment type="function">
    <text evidence="1">Required for rescue of stalled ribosomes mediated by trans-translation. Binds to transfer-messenger RNA (tmRNA), required for stable association of tmRNA with ribosomes. tmRNA and SmpB together mimic tRNA shape, replacing the anticodon stem-loop with SmpB. tmRNA is encoded by the ssrA gene; the 2 termini fold to resemble tRNA(Ala) and it encodes a 'tag peptide', a short internal open reading frame. During trans-translation Ala-aminoacylated tmRNA acts like a tRNA, entering the A-site of stalled ribosomes, displacing the stalled mRNA. The ribosome then switches to translate the ORF on the tmRNA; the nascent peptide is terminated with the 'tag peptide' encoded by the tmRNA and targeted for degradation. The ribosome is freed to recommence translation, which seems to be the essential function of trans-translation.</text>
</comment>
<comment type="subcellular location">
    <subcellularLocation>
        <location evidence="1">Cytoplasm</location>
    </subcellularLocation>
    <text evidence="1">The tmRNA-SmpB complex associates with stalled 70S ribosomes.</text>
</comment>
<comment type="similarity">
    <text evidence="1">Belongs to the SmpB family.</text>
</comment>
<comment type="sequence caution" evidence="2">
    <conflict type="erroneous initiation">
        <sequence resource="EMBL-CDS" id="ACI49904"/>
    </conflict>
    <text>Extended N-terminus.</text>
</comment>
<proteinExistence type="inferred from homology"/>